<gene>
    <name type="primary">ELMOD3</name>
    <name type="synonym">RBED1</name>
</gene>
<keyword id="KW-0025">Alternative splicing</keyword>
<keyword id="KW-0966">Cell projection</keyword>
<keyword id="KW-0969">Cilium</keyword>
<keyword id="KW-0963">Cytoplasm</keyword>
<keyword id="KW-0206">Cytoskeleton</keyword>
<keyword id="KW-0343">GTPase activation</keyword>
<keyword id="KW-1185">Reference proteome</keyword>
<name>ELMD3_BOVIN</name>
<comment type="function">
    <text evidence="1">Acts as a GTPase-activating protein (GAP) for ARL2 with low specific activity.</text>
</comment>
<comment type="subcellular location">
    <subcellularLocation>
        <location evidence="1">Cell projection</location>
        <location evidence="1">Stereocilium</location>
    </subcellularLocation>
    <subcellularLocation>
        <location evidence="1">Cell projection</location>
        <location evidence="1">Kinocilium</location>
    </subcellularLocation>
    <subcellularLocation>
        <location evidence="1">Cytoplasm</location>
        <location evidence="1">Cytoskeleton</location>
    </subcellularLocation>
    <text evidence="1">Also present in the cuticular plate of auditory hair cells. Expressed along the length of the stereocilia, but excluded from the very tip. Colocalizes with F-actin cytoskeleton (By similarity).</text>
</comment>
<comment type="alternative products">
    <event type="alternative splicing"/>
    <isoform>
        <id>Q58DT5-1</id>
        <name>1</name>
        <sequence type="displayed"/>
    </isoform>
    <isoform>
        <id>Q58DT5-2</id>
        <name>2</name>
        <sequence type="described" ref="VSP_022915 VSP_022916"/>
    </isoform>
    <isoform>
        <id>Q58DT5-3</id>
        <name>3</name>
        <sequence type="described" ref="VSP_022914 VSP_022915 VSP_022916"/>
    </isoform>
</comment>
<organism>
    <name type="scientific">Bos taurus</name>
    <name type="common">Bovine</name>
    <dbReference type="NCBI Taxonomy" id="9913"/>
    <lineage>
        <taxon>Eukaryota</taxon>
        <taxon>Metazoa</taxon>
        <taxon>Chordata</taxon>
        <taxon>Craniata</taxon>
        <taxon>Vertebrata</taxon>
        <taxon>Euteleostomi</taxon>
        <taxon>Mammalia</taxon>
        <taxon>Eutheria</taxon>
        <taxon>Laurasiatheria</taxon>
        <taxon>Artiodactyla</taxon>
        <taxon>Ruminantia</taxon>
        <taxon>Pecora</taxon>
        <taxon>Bovidae</taxon>
        <taxon>Bovinae</taxon>
        <taxon>Bos</taxon>
    </lineage>
</organism>
<sequence>MNENFHSFHEKELRDGQVESVSAGSSPPCDKDSSALLAFRGISISELKNHSVLQALTAEANAWEPRVVSTEVLQAQEEWEAVESIHPETGSRASMDQPGQLISFSEALQHFQTVDLSSFKKRIQPTIRRTGLAALRHYLFGPPKLHQGLREERDLVLTIAQCGLDSQDPMHGRVLQTIYKKLTGSKFDCALHGDHWEDLGFQGTNPATDLRGAGFLALLHLLYLVMDSKTLLMAREILRLSRHHIQQFPFCLMSVNITRIAIQALREECLSRECNRQQKVIPVVNSFYAATFLRLAHIWRTQHKTISDSGFVLKDLEMSAKKSPRRLLKTLETYLAGVSKGQASLLGTQKCSGPQAPHSKDLTFTGVCDLPSHLSEGTWLI</sequence>
<protein>
    <recommendedName>
        <fullName>ELMO domain-containing protein 3</fullName>
    </recommendedName>
    <alternativeName>
        <fullName>RNA-binding motif and ELMO domain-containing protein 1</fullName>
    </alternativeName>
</protein>
<feature type="chain" id="PRO_0000274902" description="ELMO domain-containing protein 3">
    <location>
        <begin position="1"/>
        <end position="381"/>
    </location>
</feature>
<feature type="domain" description="ELMO" evidence="2">
    <location>
        <begin position="170"/>
        <end position="324"/>
    </location>
</feature>
<feature type="region of interest" description="Disordered" evidence="3">
    <location>
        <begin position="1"/>
        <end position="31"/>
    </location>
</feature>
<feature type="compositionally biased region" description="Basic and acidic residues" evidence="3">
    <location>
        <begin position="1"/>
        <end position="17"/>
    </location>
</feature>
<feature type="splice variant" id="VSP_022914" description="In isoform 3." evidence="4">
    <original>MNENFHSFHEKELRDGQ</original>
    <variation>MVLPRFLIFDNK</variation>
    <location>
        <begin position="1"/>
        <end position="17"/>
    </location>
</feature>
<feature type="splice variant" id="VSP_022915" description="In isoform 2 and isoform 3." evidence="4">
    <original>Q</original>
    <variation>P</variation>
    <location>
        <position position="247"/>
    </location>
</feature>
<feature type="splice variant" id="VSP_022916" description="In isoform 2 and isoform 3." evidence="4">
    <location>
        <begin position="248"/>
        <end position="381"/>
    </location>
</feature>
<reference key="1">
    <citation type="journal article" date="2005" name="BMC Genomics">
        <title>Characterization of 954 bovine full-CDS cDNA sequences.</title>
        <authorList>
            <person name="Harhay G.P."/>
            <person name="Sonstegard T.S."/>
            <person name="Keele J.W."/>
            <person name="Heaton M.P."/>
            <person name="Clawson M.L."/>
            <person name="Snelling W.M."/>
            <person name="Wiedmann R.T."/>
            <person name="Van Tassell C.P."/>
            <person name="Smith T.P.L."/>
        </authorList>
    </citation>
    <scope>NUCLEOTIDE SEQUENCE [LARGE SCALE MRNA] (ISOFORMS 1; 2 AND 3)</scope>
</reference>
<evidence type="ECO:0000250" key="1"/>
<evidence type="ECO:0000255" key="2">
    <source>
        <dbReference type="PROSITE-ProRule" id="PRU00664"/>
    </source>
</evidence>
<evidence type="ECO:0000256" key="3">
    <source>
        <dbReference type="SAM" id="MobiDB-lite"/>
    </source>
</evidence>
<evidence type="ECO:0000303" key="4">
    <source>
    </source>
</evidence>
<accession>Q58DT5</accession>
<accession>Q0V8F5</accession>
<accession>Q58CP6</accession>
<dbReference type="EMBL" id="BT021512">
    <property type="protein sequence ID" value="AAX46359.1"/>
    <property type="molecule type" value="mRNA"/>
</dbReference>
<dbReference type="EMBL" id="BT021901">
    <property type="protein sequence ID" value="AAX46748.1"/>
    <property type="molecule type" value="mRNA"/>
</dbReference>
<dbReference type="EMBL" id="BT026263">
    <property type="protein sequence ID" value="ABG67102.1"/>
    <property type="molecule type" value="mRNA"/>
</dbReference>
<dbReference type="FunCoup" id="Q58DT5">
    <property type="interactions" value="3318"/>
</dbReference>
<dbReference type="STRING" id="9913.ENSBTAP00000032975"/>
<dbReference type="PaxDb" id="9913-ENSBTAP00000032975"/>
<dbReference type="VEuPathDB" id="HostDB:ENSBTAG00000021935"/>
<dbReference type="eggNOG" id="KOG2998">
    <property type="taxonomic scope" value="Eukaryota"/>
</dbReference>
<dbReference type="InParanoid" id="Q58DT5"/>
<dbReference type="OrthoDB" id="266227at2759"/>
<dbReference type="Proteomes" id="UP000009136">
    <property type="component" value="Chromosome 11"/>
</dbReference>
<dbReference type="Bgee" id="ENSBTAG00000021935">
    <property type="expression patterns" value="Expressed in granulosa cell and 111 other cell types or tissues"/>
</dbReference>
<dbReference type="GO" id="GO:0005737">
    <property type="term" value="C:cytoplasm"/>
    <property type="evidence" value="ECO:0007669"/>
    <property type="project" value="UniProtKB-KW"/>
</dbReference>
<dbReference type="GO" id="GO:0005856">
    <property type="term" value="C:cytoskeleton"/>
    <property type="evidence" value="ECO:0007669"/>
    <property type="project" value="UniProtKB-SubCell"/>
</dbReference>
<dbReference type="GO" id="GO:0060091">
    <property type="term" value="C:kinocilium"/>
    <property type="evidence" value="ECO:0007669"/>
    <property type="project" value="UniProtKB-SubCell"/>
</dbReference>
<dbReference type="GO" id="GO:0032420">
    <property type="term" value="C:stereocilium"/>
    <property type="evidence" value="ECO:0007669"/>
    <property type="project" value="UniProtKB-SubCell"/>
</dbReference>
<dbReference type="InterPro" id="IPR006816">
    <property type="entry name" value="ELMO_dom"/>
</dbReference>
<dbReference type="InterPro" id="IPR050868">
    <property type="entry name" value="ELMO_domain-containing"/>
</dbReference>
<dbReference type="PANTHER" id="PTHR12771:SF2">
    <property type="entry name" value="ELMO DOMAIN-CONTAINING PROTEIN 3"/>
    <property type="match status" value="1"/>
</dbReference>
<dbReference type="PANTHER" id="PTHR12771">
    <property type="entry name" value="ENGULFMENT AND CELL MOTILITY"/>
    <property type="match status" value="1"/>
</dbReference>
<dbReference type="Pfam" id="PF04727">
    <property type="entry name" value="ELMO_CED12"/>
    <property type="match status" value="1"/>
</dbReference>
<dbReference type="PROSITE" id="PS51335">
    <property type="entry name" value="ELMO"/>
    <property type="match status" value="1"/>
</dbReference>
<proteinExistence type="evidence at transcript level"/>